<accession>B1JVA0</accession>
<gene>
    <name evidence="1" type="primary">rpmA</name>
    <name type="ordered locus">Bcenmc03_0552</name>
</gene>
<organism>
    <name type="scientific">Burkholderia orbicola (strain MC0-3)</name>
    <dbReference type="NCBI Taxonomy" id="406425"/>
    <lineage>
        <taxon>Bacteria</taxon>
        <taxon>Pseudomonadati</taxon>
        <taxon>Pseudomonadota</taxon>
        <taxon>Betaproteobacteria</taxon>
        <taxon>Burkholderiales</taxon>
        <taxon>Burkholderiaceae</taxon>
        <taxon>Burkholderia</taxon>
        <taxon>Burkholderia cepacia complex</taxon>
        <taxon>Burkholderia orbicola</taxon>
    </lineage>
</organism>
<evidence type="ECO:0000255" key="1">
    <source>
        <dbReference type="HAMAP-Rule" id="MF_00539"/>
    </source>
</evidence>
<evidence type="ECO:0000256" key="2">
    <source>
        <dbReference type="SAM" id="MobiDB-lite"/>
    </source>
</evidence>
<evidence type="ECO:0000305" key="3"/>
<keyword id="KW-0687">Ribonucleoprotein</keyword>
<keyword id="KW-0689">Ribosomal protein</keyword>
<protein>
    <recommendedName>
        <fullName evidence="1">Large ribosomal subunit protein bL27</fullName>
    </recommendedName>
    <alternativeName>
        <fullName evidence="3">50S ribosomal protein L27</fullName>
    </alternativeName>
</protein>
<dbReference type="EMBL" id="CP000958">
    <property type="protein sequence ID" value="ACA89730.1"/>
    <property type="molecule type" value="Genomic_DNA"/>
</dbReference>
<dbReference type="RefSeq" id="WP_006476999.1">
    <property type="nucleotide sequence ID" value="NC_010508.1"/>
</dbReference>
<dbReference type="SMR" id="B1JVA0"/>
<dbReference type="GeneID" id="98106573"/>
<dbReference type="KEGG" id="bcm:Bcenmc03_0552"/>
<dbReference type="HOGENOM" id="CLU_095424_4_1_4"/>
<dbReference type="Proteomes" id="UP000002169">
    <property type="component" value="Chromosome 1"/>
</dbReference>
<dbReference type="GO" id="GO:0022625">
    <property type="term" value="C:cytosolic large ribosomal subunit"/>
    <property type="evidence" value="ECO:0007669"/>
    <property type="project" value="TreeGrafter"/>
</dbReference>
<dbReference type="GO" id="GO:0003735">
    <property type="term" value="F:structural constituent of ribosome"/>
    <property type="evidence" value="ECO:0007669"/>
    <property type="project" value="InterPro"/>
</dbReference>
<dbReference type="GO" id="GO:0006412">
    <property type="term" value="P:translation"/>
    <property type="evidence" value="ECO:0007669"/>
    <property type="project" value="UniProtKB-UniRule"/>
</dbReference>
<dbReference type="FunFam" id="2.40.50.100:FF:000001">
    <property type="entry name" value="50S ribosomal protein L27"/>
    <property type="match status" value="1"/>
</dbReference>
<dbReference type="Gene3D" id="2.40.50.100">
    <property type="match status" value="1"/>
</dbReference>
<dbReference type="HAMAP" id="MF_00539">
    <property type="entry name" value="Ribosomal_bL27"/>
    <property type="match status" value="1"/>
</dbReference>
<dbReference type="InterPro" id="IPR001684">
    <property type="entry name" value="Ribosomal_bL27"/>
</dbReference>
<dbReference type="InterPro" id="IPR018261">
    <property type="entry name" value="Ribosomal_bL27_CS"/>
</dbReference>
<dbReference type="NCBIfam" id="TIGR00062">
    <property type="entry name" value="L27"/>
    <property type="match status" value="1"/>
</dbReference>
<dbReference type="PANTHER" id="PTHR15893:SF0">
    <property type="entry name" value="LARGE RIBOSOMAL SUBUNIT PROTEIN BL27M"/>
    <property type="match status" value="1"/>
</dbReference>
<dbReference type="PANTHER" id="PTHR15893">
    <property type="entry name" value="RIBOSOMAL PROTEIN L27"/>
    <property type="match status" value="1"/>
</dbReference>
<dbReference type="Pfam" id="PF01016">
    <property type="entry name" value="Ribosomal_L27"/>
    <property type="match status" value="1"/>
</dbReference>
<dbReference type="PRINTS" id="PR00063">
    <property type="entry name" value="RIBOSOMALL27"/>
</dbReference>
<dbReference type="SUPFAM" id="SSF110324">
    <property type="entry name" value="Ribosomal L27 protein-like"/>
    <property type="match status" value="1"/>
</dbReference>
<dbReference type="PROSITE" id="PS00831">
    <property type="entry name" value="RIBOSOMAL_L27"/>
    <property type="match status" value="1"/>
</dbReference>
<reference key="1">
    <citation type="submission" date="2008-02" db="EMBL/GenBank/DDBJ databases">
        <title>Complete sequence of chromosome 1 of Burkholderia cenocepacia MC0-3.</title>
        <authorList>
            <person name="Copeland A."/>
            <person name="Lucas S."/>
            <person name="Lapidus A."/>
            <person name="Barry K."/>
            <person name="Bruce D."/>
            <person name="Goodwin L."/>
            <person name="Glavina del Rio T."/>
            <person name="Dalin E."/>
            <person name="Tice H."/>
            <person name="Pitluck S."/>
            <person name="Chain P."/>
            <person name="Malfatti S."/>
            <person name="Shin M."/>
            <person name="Vergez L."/>
            <person name="Schmutz J."/>
            <person name="Larimer F."/>
            <person name="Land M."/>
            <person name="Hauser L."/>
            <person name="Kyrpides N."/>
            <person name="Mikhailova N."/>
            <person name="Tiedje J."/>
            <person name="Richardson P."/>
        </authorList>
    </citation>
    <scope>NUCLEOTIDE SEQUENCE [LARGE SCALE GENOMIC DNA]</scope>
    <source>
        <strain>MC0-3</strain>
    </source>
</reference>
<comment type="similarity">
    <text evidence="1">Belongs to the bacterial ribosomal protein bL27 family.</text>
</comment>
<feature type="chain" id="PRO_1000128705" description="Large ribosomal subunit protein bL27">
    <location>
        <begin position="1"/>
        <end position="87"/>
    </location>
</feature>
<feature type="region of interest" description="Disordered" evidence="2">
    <location>
        <begin position="1"/>
        <end position="21"/>
    </location>
</feature>
<name>RL27_BURO0</name>
<proteinExistence type="inferred from homology"/>
<sequence length="87" mass="9089">MAHKKAGGSSRNGRDSESKRLGVKVYGGQAINAGGIIVRQRGTRMHAGENVGMGKDHTLFALVDGHVKFATKGADKKHLVIVVPAAA</sequence>